<keyword id="KW-0067">ATP-binding</keyword>
<keyword id="KW-0143">Chaperone</keyword>
<keyword id="KW-0963">Cytoplasm</keyword>
<keyword id="KW-0547">Nucleotide-binding</keyword>
<keyword id="KW-1185">Reference proteome</keyword>
<keyword id="KW-0346">Stress response</keyword>
<name>HTPG_POLSJ</name>
<sequence length="626" mass="69699">MHKQTLSFQAEVAQLLNLVTHSLYSNPDIFLRELISNASDACDKLRFEALNDAALYEGDSELQVRLRYNKTANTLTITDNGIGLSEREAIENLGTIAKSGTRDFMAKLSGDQKNDAQLIGQFGVGFYSGFIVADRITVESRRAGLPATQGVRWSSEGTGEFEVSEMERAERGTSIILHLKDDARDYLNAWKLKGIINKYSDHISLPILMQKEEWKEGENGQPGEMVVTGEWETVNQAAALWTRAKKDITPEQYDEFYKQISYDSQAPLATTHNRVEGGTEYTQLLFIPAKAPMDLFNRDKAAGVKLYVRRVFIMDDAQALMPTYLRFVKGVVDSADLPLNVSRELLQESRAVKAIREGNTRRVLSMIEDLAANDADKFKAFYAEFGAVLKEGLGEDFANRERLAKLLRFASSTTDTVSVGFADYKARMKEGQDAIYYVTADTLAAAKSSPQLEIFRKKGIEVLLMADRVDEWALNYLHEFDGTPLQSVAKGAVDLGKLQDEDEKKAAEEAQTHFKPILDKLKEALKDKAKDVRATTRLVDSPACLVVQDGDMSTQLARMLKQAGQAVPEVKPILEVNAQHPLVKKLEAGEHFDDLAHILFDQALLAEGGMPEDPAAYVKRVNALLV</sequence>
<feature type="chain" id="PRO_0000258517" description="Chaperone protein HtpG">
    <location>
        <begin position="1"/>
        <end position="626"/>
    </location>
</feature>
<feature type="region of interest" description="A; substrate-binding" evidence="1">
    <location>
        <begin position="1"/>
        <end position="343"/>
    </location>
</feature>
<feature type="region of interest" description="B" evidence="1">
    <location>
        <begin position="344"/>
        <end position="558"/>
    </location>
</feature>
<feature type="region of interest" description="C" evidence="1">
    <location>
        <begin position="559"/>
        <end position="626"/>
    </location>
</feature>
<organism>
    <name type="scientific">Polaromonas sp. (strain JS666 / ATCC BAA-500)</name>
    <dbReference type="NCBI Taxonomy" id="296591"/>
    <lineage>
        <taxon>Bacteria</taxon>
        <taxon>Pseudomonadati</taxon>
        <taxon>Pseudomonadota</taxon>
        <taxon>Betaproteobacteria</taxon>
        <taxon>Burkholderiales</taxon>
        <taxon>Comamonadaceae</taxon>
        <taxon>Polaromonas</taxon>
    </lineage>
</organism>
<dbReference type="EMBL" id="CP000316">
    <property type="protein sequence ID" value="ABE42574.1"/>
    <property type="molecule type" value="Genomic_DNA"/>
</dbReference>
<dbReference type="RefSeq" id="WP_011481577.1">
    <property type="nucleotide sequence ID" value="NC_007948.1"/>
</dbReference>
<dbReference type="SMR" id="Q12FW8"/>
<dbReference type="STRING" id="296591.Bpro_0614"/>
<dbReference type="KEGG" id="pol:Bpro_0614"/>
<dbReference type="eggNOG" id="COG0326">
    <property type="taxonomic scope" value="Bacteria"/>
</dbReference>
<dbReference type="HOGENOM" id="CLU_006684_3_0_4"/>
<dbReference type="OrthoDB" id="9802640at2"/>
<dbReference type="Proteomes" id="UP000001983">
    <property type="component" value="Chromosome"/>
</dbReference>
<dbReference type="GO" id="GO:0005737">
    <property type="term" value="C:cytoplasm"/>
    <property type="evidence" value="ECO:0007669"/>
    <property type="project" value="UniProtKB-SubCell"/>
</dbReference>
<dbReference type="GO" id="GO:0005524">
    <property type="term" value="F:ATP binding"/>
    <property type="evidence" value="ECO:0007669"/>
    <property type="project" value="UniProtKB-UniRule"/>
</dbReference>
<dbReference type="GO" id="GO:0016887">
    <property type="term" value="F:ATP hydrolysis activity"/>
    <property type="evidence" value="ECO:0007669"/>
    <property type="project" value="InterPro"/>
</dbReference>
<dbReference type="GO" id="GO:0140662">
    <property type="term" value="F:ATP-dependent protein folding chaperone"/>
    <property type="evidence" value="ECO:0007669"/>
    <property type="project" value="InterPro"/>
</dbReference>
<dbReference type="GO" id="GO:0051082">
    <property type="term" value="F:unfolded protein binding"/>
    <property type="evidence" value="ECO:0007669"/>
    <property type="project" value="UniProtKB-UniRule"/>
</dbReference>
<dbReference type="CDD" id="cd16927">
    <property type="entry name" value="HATPase_Hsp90-like"/>
    <property type="match status" value="1"/>
</dbReference>
<dbReference type="FunFam" id="3.30.230.80:FF:000002">
    <property type="entry name" value="Molecular chaperone HtpG"/>
    <property type="match status" value="1"/>
</dbReference>
<dbReference type="FunFam" id="3.30.565.10:FF:000009">
    <property type="entry name" value="Molecular chaperone HtpG"/>
    <property type="match status" value="1"/>
</dbReference>
<dbReference type="Gene3D" id="3.30.230.80">
    <property type="match status" value="1"/>
</dbReference>
<dbReference type="Gene3D" id="3.40.50.11260">
    <property type="match status" value="1"/>
</dbReference>
<dbReference type="Gene3D" id="1.20.120.790">
    <property type="entry name" value="Heat shock protein 90, C-terminal domain"/>
    <property type="match status" value="1"/>
</dbReference>
<dbReference type="Gene3D" id="3.30.565.10">
    <property type="entry name" value="Histidine kinase-like ATPase, C-terminal domain"/>
    <property type="match status" value="1"/>
</dbReference>
<dbReference type="HAMAP" id="MF_00505">
    <property type="entry name" value="HSP90"/>
    <property type="match status" value="1"/>
</dbReference>
<dbReference type="InterPro" id="IPR036890">
    <property type="entry name" value="HATPase_C_sf"/>
</dbReference>
<dbReference type="InterPro" id="IPR037196">
    <property type="entry name" value="HSP90_C"/>
</dbReference>
<dbReference type="InterPro" id="IPR001404">
    <property type="entry name" value="Hsp90_fam"/>
</dbReference>
<dbReference type="InterPro" id="IPR020575">
    <property type="entry name" value="Hsp90_N"/>
</dbReference>
<dbReference type="InterPro" id="IPR020568">
    <property type="entry name" value="Ribosomal_Su5_D2-typ_SF"/>
</dbReference>
<dbReference type="NCBIfam" id="NF003555">
    <property type="entry name" value="PRK05218.1"/>
    <property type="match status" value="1"/>
</dbReference>
<dbReference type="PANTHER" id="PTHR11528">
    <property type="entry name" value="HEAT SHOCK PROTEIN 90 FAMILY MEMBER"/>
    <property type="match status" value="1"/>
</dbReference>
<dbReference type="Pfam" id="PF13589">
    <property type="entry name" value="HATPase_c_3"/>
    <property type="match status" value="1"/>
</dbReference>
<dbReference type="Pfam" id="PF00183">
    <property type="entry name" value="HSP90"/>
    <property type="match status" value="1"/>
</dbReference>
<dbReference type="PIRSF" id="PIRSF002583">
    <property type="entry name" value="Hsp90"/>
    <property type="match status" value="1"/>
</dbReference>
<dbReference type="PRINTS" id="PR00775">
    <property type="entry name" value="HEATSHOCK90"/>
</dbReference>
<dbReference type="SMART" id="SM00387">
    <property type="entry name" value="HATPase_c"/>
    <property type="match status" value="1"/>
</dbReference>
<dbReference type="SUPFAM" id="SSF55874">
    <property type="entry name" value="ATPase domain of HSP90 chaperone/DNA topoisomerase II/histidine kinase"/>
    <property type="match status" value="1"/>
</dbReference>
<dbReference type="SUPFAM" id="SSF110942">
    <property type="entry name" value="HSP90 C-terminal domain"/>
    <property type="match status" value="1"/>
</dbReference>
<dbReference type="SUPFAM" id="SSF54211">
    <property type="entry name" value="Ribosomal protein S5 domain 2-like"/>
    <property type="match status" value="1"/>
</dbReference>
<reference key="1">
    <citation type="journal article" date="2008" name="Appl. Environ. Microbiol.">
        <title>The genome of Polaromonas sp. strain JS666: insights into the evolution of a hydrocarbon- and xenobiotic-degrading bacterium, and features of relevance to biotechnology.</title>
        <authorList>
            <person name="Mattes T.E."/>
            <person name="Alexander A.K."/>
            <person name="Richardson P.M."/>
            <person name="Munk A.C."/>
            <person name="Han C.S."/>
            <person name="Stothard P."/>
            <person name="Coleman N.V."/>
        </authorList>
    </citation>
    <scope>NUCLEOTIDE SEQUENCE [LARGE SCALE GENOMIC DNA]</scope>
    <source>
        <strain>JS666 / ATCC BAA-500</strain>
    </source>
</reference>
<accession>Q12FW8</accession>
<evidence type="ECO:0000255" key="1">
    <source>
        <dbReference type="HAMAP-Rule" id="MF_00505"/>
    </source>
</evidence>
<protein>
    <recommendedName>
        <fullName evidence="1">Chaperone protein HtpG</fullName>
    </recommendedName>
    <alternativeName>
        <fullName evidence="1">Heat shock protein HtpG</fullName>
    </alternativeName>
    <alternativeName>
        <fullName evidence="1">High temperature protein G</fullName>
    </alternativeName>
</protein>
<gene>
    <name evidence="1" type="primary">htpG</name>
    <name type="ordered locus">Bpro_0614</name>
</gene>
<proteinExistence type="inferred from homology"/>
<comment type="function">
    <text evidence="1">Molecular chaperone. Has ATPase activity.</text>
</comment>
<comment type="subunit">
    <text evidence="1">Homodimer.</text>
</comment>
<comment type="subcellular location">
    <subcellularLocation>
        <location evidence="1">Cytoplasm</location>
    </subcellularLocation>
</comment>
<comment type="similarity">
    <text evidence="1">Belongs to the heat shock protein 90 family.</text>
</comment>